<organism>
    <name type="scientific">Solenopsis geminata</name>
    <name type="common">Tropical fire ant</name>
    <dbReference type="NCBI Taxonomy" id="121131"/>
    <lineage>
        <taxon>Eukaryota</taxon>
        <taxon>Metazoa</taxon>
        <taxon>Ecdysozoa</taxon>
        <taxon>Arthropoda</taxon>
        <taxon>Hexapoda</taxon>
        <taxon>Insecta</taxon>
        <taxon>Pterygota</taxon>
        <taxon>Neoptera</taxon>
        <taxon>Endopterygota</taxon>
        <taxon>Hymenoptera</taxon>
        <taxon>Apocrita</taxon>
        <taxon>Aculeata</taxon>
        <taxon>Formicoidea</taxon>
        <taxon>Formicidae</taxon>
        <taxon>Myrmicinae</taxon>
        <taxon>Solenopsis</taxon>
    </lineage>
</organism>
<protein>
    <recommendedName>
        <fullName>Venom allergen 4</fullName>
    </recommendedName>
    <alternativeName>
        <fullName>Venom allergen IV</fullName>
    </alternativeName>
    <allergenName>Sol g 4</allergenName>
</protein>
<name>VA4_SOLGE</name>
<feature type="signal peptide" evidence="1">
    <location>
        <begin position="1"/>
        <end position="19"/>
    </location>
</feature>
<feature type="chain" id="PRO_0000022647" description="Venom allergen 4">
    <location>
        <begin position="20"/>
        <end position="137"/>
    </location>
</feature>
<feature type="sequence variant" description="In Sol g 4.02.">
    <original>M</original>
    <variation>V</variation>
    <location>
        <position position="28"/>
    </location>
</feature>
<feature type="sequence variant" description="In Sol g 4.02.">
    <original>E</original>
    <variation>K</variation>
    <location>
        <position position="33"/>
    </location>
</feature>
<feature type="sequence variant" description="In Sol g 4.02.">
    <original>L</original>
    <variation>R</variation>
    <location>
        <position position="123"/>
    </location>
</feature>
<accession>Q9NH75</accession>
<accession>Q9NH74</accession>
<dbReference type="EMBL" id="AF230383">
    <property type="protein sequence ID" value="AAF65312.1"/>
    <property type="molecule type" value="mRNA"/>
</dbReference>
<dbReference type="EMBL" id="AF230384">
    <property type="protein sequence ID" value="AAF65313.1"/>
    <property type="molecule type" value="mRNA"/>
</dbReference>
<dbReference type="SMR" id="Q9NH75"/>
<dbReference type="Allergome" id="3479">
    <property type="allergen name" value="Sol g 4.0101"/>
</dbReference>
<dbReference type="Allergome" id="3480">
    <property type="allergen name" value="Sol g 4.0201"/>
</dbReference>
<dbReference type="Allergome" id="629">
    <property type="allergen name" value="Sol g 4"/>
</dbReference>
<dbReference type="GO" id="GO:0005576">
    <property type="term" value="C:extracellular region"/>
    <property type="evidence" value="ECO:0007669"/>
    <property type="project" value="UniProtKB-SubCell"/>
</dbReference>
<dbReference type="GO" id="GO:0005549">
    <property type="term" value="F:odorant binding"/>
    <property type="evidence" value="ECO:0007669"/>
    <property type="project" value="InterPro"/>
</dbReference>
<dbReference type="Gene3D" id="1.10.238.190">
    <property type="match status" value="1"/>
</dbReference>
<dbReference type="InterPro" id="IPR038211">
    <property type="entry name" value="Ant_venon_allerg_soli_2/4_sf"/>
</dbReference>
<dbReference type="InterPro" id="IPR036728">
    <property type="entry name" value="PBP_GOBP_sf"/>
</dbReference>
<dbReference type="InterPro" id="IPR055216">
    <property type="entry name" value="Sol_i_2/4"/>
</dbReference>
<dbReference type="Pfam" id="PF22750">
    <property type="entry name" value="Sol_i_2"/>
    <property type="match status" value="1"/>
</dbReference>
<dbReference type="SUPFAM" id="SSF47565">
    <property type="entry name" value="Insect pheromone/odorant-binding proteins"/>
    <property type="match status" value="1"/>
</dbReference>
<keyword id="KW-0020">Allergen</keyword>
<keyword id="KW-0964">Secreted</keyword>
<keyword id="KW-0732">Signal</keyword>
<reference key="1">
    <citation type="submission" date="2000-02" db="EMBL/GenBank/DDBJ databases">
        <title>Allergens from tropical fire ant venom.</title>
        <authorList>
            <person name="Schmidt M."/>
            <person name="Hoffman D.R."/>
        </authorList>
    </citation>
    <scope>NUCLEOTIDE SEQUENCE [MRNA]</scope>
    <source>
        <tissue>Venom gland</tissue>
    </source>
</reference>
<evidence type="ECO:0000250" key="1"/>
<evidence type="ECO:0000305" key="2"/>
<comment type="subunit">
    <text evidence="1">Monomer.</text>
</comment>
<comment type="subcellular location">
    <subcellularLocation>
        <location>Secreted</location>
    </subcellularLocation>
</comment>
<comment type="tissue specificity">
    <text>Expressed by the venom gland.</text>
</comment>
<comment type="allergen">
    <text>Causes an allergic reaction in human. The most common cause of insect venom allergy in the southeastern United States is the imported fire ant.</text>
</comment>
<comment type="similarity">
    <text evidence="2">Belongs to the ant venom allergen 2/4 family.</text>
</comment>
<sequence length="137" mass="15667">MKTFVLVSCLLVFTQIIYAVDIKELKIMNRILEKCIRTVPKGENDPINPLKNVNVLYCAFSKRGIFTPKGVNTKQYINYCEKTIINPADIKQCKKLISKCIKKVYDRPGPIIERSKNLLSCVLKKGVLELTVYGKKK</sequence>
<proteinExistence type="evidence at protein level"/>